<protein>
    <recommendedName>
        <fullName evidence="1">GTPase Era</fullName>
    </recommendedName>
</protein>
<sequence length="300" mass="32460">MTEFHSGFVCLVGRPNTGKSTLTNALVGAKVAITSTRPQTTRHAIRGIVHSDDFQIILVDTPGLHRPRTLLGKRLNDLVRETYAAVDVIGLCIPADEAIGPGDRWIVEQLRSTGPANTTLVVIVTKIDKVPKEKVVAQLVAVSELVTNAAEIVPVSAMTGDRVDLLIDVLAAALPAGPAYYPDGELTDEPEEVLMAELIREAALQGVRDELPHSLAVVIDEVSPREGRDDLIDVHAALYVERDSQKGIVIGKGGARLREVGTAARSQIENLLGTKVYLDLRVKVAKNWQRDPKQLGRLGF</sequence>
<organism>
    <name type="scientific">Mycobacterium bovis (strain BCG / Pasteur 1173P2)</name>
    <dbReference type="NCBI Taxonomy" id="410289"/>
    <lineage>
        <taxon>Bacteria</taxon>
        <taxon>Bacillati</taxon>
        <taxon>Actinomycetota</taxon>
        <taxon>Actinomycetes</taxon>
        <taxon>Mycobacteriales</taxon>
        <taxon>Mycobacteriaceae</taxon>
        <taxon>Mycobacterium</taxon>
        <taxon>Mycobacterium tuberculosis complex</taxon>
    </lineage>
</organism>
<proteinExistence type="inferred from homology"/>
<keyword id="KW-0134">Cell wall</keyword>
<keyword id="KW-0342">GTP-binding</keyword>
<keyword id="KW-0547">Nucleotide-binding</keyword>
<keyword id="KW-0694">RNA-binding</keyword>
<keyword id="KW-0964">Secreted</keyword>
<name>ERA_MYCBP</name>
<accession>A1KL54</accession>
<reference key="1">
    <citation type="journal article" date="2007" name="Proc. Natl. Acad. Sci. U.S.A.">
        <title>Genome plasticity of BCG and impact on vaccine efficacy.</title>
        <authorList>
            <person name="Brosch R."/>
            <person name="Gordon S.V."/>
            <person name="Garnier T."/>
            <person name="Eiglmeier K."/>
            <person name="Frigui W."/>
            <person name="Valenti P."/>
            <person name="Dos Santos S."/>
            <person name="Duthoy S."/>
            <person name="Lacroix C."/>
            <person name="Garcia-Pelayo C."/>
            <person name="Inwald J.K."/>
            <person name="Golby P."/>
            <person name="Garcia J.N."/>
            <person name="Hewinson R.G."/>
            <person name="Behr M.A."/>
            <person name="Quail M.A."/>
            <person name="Churcher C."/>
            <person name="Barrell B.G."/>
            <person name="Parkhill J."/>
            <person name="Cole S.T."/>
        </authorList>
    </citation>
    <scope>NUCLEOTIDE SEQUENCE [LARGE SCALE GENOMIC DNA]</scope>
    <source>
        <strain>BCG / Pasteur 1173P2</strain>
    </source>
</reference>
<gene>
    <name evidence="1" type="primary">era</name>
    <name type="ordered locus">BCG_2378c</name>
</gene>
<comment type="function">
    <text evidence="1">Exhibits GTPase activity. Binds RNA but is probably not involved in ribosome assembly in mycobacteria.</text>
</comment>
<comment type="subunit">
    <text evidence="1">Monomer.</text>
</comment>
<comment type="subcellular location">
    <subcellularLocation>
        <location evidence="1">Cell envelope</location>
    </subcellularLocation>
    <subcellularLocation>
        <location evidence="1">Secreted</location>
        <location evidence="1">Cell wall</location>
    </subcellularLocation>
</comment>
<comment type="similarity">
    <text evidence="1">Belongs to the TRAFAC class TrmE-Era-EngA-EngB-Septin-like GTPase superfamily. Era GTPase family.</text>
</comment>
<feature type="chain" id="PRO_1000079710" description="GTPase Era">
    <location>
        <begin position="1"/>
        <end position="300"/>
    </location>
</feature>
<feature type="domain" description="Era-type G" evidence="2">
    <location>
        <begin position="5"/>
        <end position="176"/>
    </location>
</feature>
<feature type="domain" description="KH type-2" evidence="1">
    <location>
        <begin position="207"/>
        <end position="286"/>
    </location>
</feature>
<feature type="region of interest" description="G1" evidence="2">
    <location>
        <begin position="13"/>
        <end position="20"/>
    </location>
</feature>
<feature type="region of interest" description="G2" evidence="2">
    <location>
        <begin position="39"/>
        <end position="43"/>
    </location>
</feature>
<feature type="region of interest" description="G3" evidence="2">
    <location>
        <begin position="60"/>
        <end position="63"/>
    </location>
</feature>
<feature type="region of interest" description="G4" evidence="2">
    <location>
        <begin position="125"/>
        <end position="128"/>
    </location>
</feature>
<feature type="region of interest" description="G5" evidence="2">
    <location>
        <begin position="155"/>
        <end position="157"/>
    </location>
</feature>
<feature type="binding site" evidence="1">
    <location>
        <begin position="13"/>
        <end position="20"/>
    </location>
    <ligand>
        <name>GTP</name>
        <dbReference type="ChEBI" id="CHEBI:37565"/>
    </ligand>
</feature>
<feature type="binding site" evidence="1">
    <location>
        <begin position="60"/>
        <end position="64"/>
    </location>
    <ligand>
        <name>GTP</name>
        <dbReference type="ChEBI" id="CHEBI:37565"/>
    </ligand>
</feature>
<feature type="binding site" evidence="1">
    <location>
        <begin position="125"/>
        <end position="128"/>
    </location>
    <ligand>
        <name>GTP</name>
        <dbReference type="ChEBI" id="CHEBI:37565"/>
    </ligand>
</feature>
<evidence type="ECO:0000255" key="1">
    <source>
        <dbReference type="HAMAP-Rule" id="MF_00367"/>
    </source>
</evidence>
<evidence type="ECO:0000255" key="2">
    <source>
        <dbReference type="PROSITE-ProRule" id="PRU01050"/>
    </source>
</evidence>
<dbReference type="EMBL" id="AM408590">
    <property type="protein sequence ID" value="CAL72366.1"/>
    <property type="molecule type" value="Genomic_DNA"/>
</dbReference>
<dbReference type="RefSeq" id="WP_003412224.1">
    <property type="nucleotide sequence ID" value="NC_008769.1"/>
</dbReference>
<dbReference type="SMR" id="A1KL54"/>
<dbReference type="GeneID" id="45426351"/>
<dbReference type="KEGG" id="mbb:BCG_2378c"/>
<dbReference type="HOGENOM" id="CLU_038009_0_2_11"/>
<dbReference type="Proteomes" id="UP000001472">
    <property type="component" value="Chromosome"/>
</dbReference>
<dbReference type="GO" id="GO:0030313">
    <property type="term" value="C:cell envelope"/>
    <property type="evidence" value="ECO:0007669"/>
    <property type="project" value="UniProtKB-SubCell"/>
</dbReference>
<dbReference type="GO" id="GO:0005829">
    <property type="term" value="C:cytosol"/>
    <property type="evidence" value="ECO:0007669"/>
    <property type="project" value="TreeGrafter"/>
</dbReference>
<dbReference type="GO" id="GO:0005576">
    <property type="term" value="C:extracellular region"/>
    <property type="evidence" value="ECO:0007669"/>
    <property type="project" value="UniProtKB-KW"/>
</dbReference>
<dbReference type="GO" id="GO:0005525">
    <property type="term" value="F:GTP binding"/>
    <property type="evidence" value="ECO:0007669"/>
    <property type="project" value="UniProtKB-UniRule"/>
</dbReference>
<dbReference type="GO" id="GO:0003924">
    <property type="term" value="F:GTPase activity"/>
    <property type="evidence" value="ECO:0007669"/>
    <property type="project" value="UniProtKB-UniRule"/>
</dbReference>
<dbReference type="GO" id="GO:0043024">
    <property type="term" value="F:ribosomal small subunit binding"/>
    <property type="evidence" value="ECO:0007669"/>
    <property type="project" value="TreeGrafter"/>
</dbReference>
<dbReference type="GO" id="GO:0019843">
    <property type="term" value="F:rRNA binding"/>
    <property type="evidence" value="ECO:0007669"/>
    <property type="project" value="TreeGrafter"/>
</dbReference>
<dbReference type="GO" id="GO:0000028">
    <property type="term" value="P:ribosomal small subunit assembly"/>
    <property type="evidence" value="ECO:0007669"/>
    <property type="project" value="TreeGrafter"/>
</dbReference>
<dbReference type="CDD" id="cd04163">
    <property type="entry name" value="Era"/>
    <property type="match status" value="1"/>
</dbReference>
<dbReference type="CDD" id="cd22534">
    <property type="entry name" value="KH-II_Era"/>
    <property type="match status" value="1"/>
</dbReference>
<dbReference type="FunFam" id="3.30.300.20:FF:000003">
    <property type="entry name" value="GTPase Era"/>
    <property type="match status" value="1"/>
</dbReference>
<dbReference type="FunFam" id="3.40.50.300:FF:000094">
    <property type="entry name" value="GTPase Era"/>
    <property type="match status" value="1"/>
</dbReference>
<dbReference type="Gene3D" id="3.30.300.20">
    <property type="match status" value="1"/>
</dbReference>
<dbReference type="Gene3D" id="3.40.50.300">
    <property type="entry name" value="P-loop containing nucleotide triphosphate hydrolases"/>
    <property type="match status" value="1"/>
</dbReference>
<dbReference type="HAMAP" id="MF_00367">
    <property type="entry name" value="GTPase_Era"/>
    <property type="match status" value="1"/>
</dbReference>
<dbReference type="InterPro" id="IPR030388">
    <property type="entry name" value="G_ERA_dom"/>
</dbReference>
<dbReference type="InterPro" id="IPR006073">
    <property type="entry name" value="GTP-bd"/>
</dbReference>
<dbReference type="InterPro" id="IPR005662">
    <property type="entry name" value="GTPase_Era-like"/>
</dbReference>
<dbReference type="InterPro" id="IPR015946">
    <property type="entry name" value="KH_dom-like_a/b"/>
</dbReference>
<dbReference type="InterPro" id="IPR004044">
    <property type="entry name" value="KH_dom_type_2"/>
</dbReference>
<dbReference type="InterPro" id="IPR009019">
    <property type="entry name" value="KH_sf_prok-type"/>
</dbReference>
<dbReference type="InterPro" id="IPR027417">
    <property type="entry name" value="P-loop_NTPase"/>
</dbReference>
<dbReference type="InterPro" id="IPR005225">
    <property type="entry name" value="Small_GTP-bd"/>
</dbReference>
<dbReference type="NCBIfam" id="TIGR00436">
    <property type="entry name" value="era"/>
    <property type="match status" value="1"/>
</dbReference>
<dbReference type="NCBIfam" id="NF000908">
    <property type="entry name" value="PRK00089.1"/>
    <property type="match status" value="1"/>
</dbReference>
<dbReference type="NCBIfam" id="TIGR00231">
    <property type="entry name" value="small_GTP"/>
    <property type="match status" value="1"/>
</dbReference>
<dbReference type="PANTHER" id="PTHR42698">
    <property type="entry name" value="GTPASE ERA"/>
    <property type="match status" value="1"/>
</dbReference>
<dbReference type="PANTHER" id="PTHR42698:SF1">
    <property type="entry name" value="GTPASE ERA, MITOCHONDRIAL"/>
    <property type="match status" value="1"/>
</dbReference>
<dbReference type="Pfam" id="PF07650">
    <property type="entry name" value="KH_2"/>
    <property type="match status" value="1"/>
</dbReference>
<dbReference type="Pfam" id="PF01926">
    <property type="entry name" value="MMR_HSR1"/>
    <property type="match status" value="1"/>
</dbReference>
<dbReference type="PRINTS" id="PR00326">
    <property type="entry name" value="GTP1OBG"/>
</dbReference>
<dbReference type="SUPFAM" id="SSF52540">
    <property type="entry name" value="P-loop containing nucleoside triphosphate hydrolases"/>
    <property type="match status" value="1"/>
</dbReference>
<dbReference type="SUPFAM" id="SSF54814">
    <property type="entry name" value="Prokaryotic type KH domain (KH-domain type II)"/>
    <property type="match status" value="1"/>
</dbReference>
<dbReference type="PROSITE" id="PS51713">
    <property type="entry name" value="G_ERA"/>
    <property type="match status" value="1"/>
</dbReference>
<dbReference type="PROSITE" id="PS50823">
    <property type="entry name" value="KH_TYPE_2"/>
    <property type="match status" value="1"/>
</dbReference>